<sequence>MANYFNTLNLRQQLAQLGKCRFMARDEFADEAGYLKGKKVVIVGCGAQGLNQGLNMRDSGLDVAYALRKEAIAEKRASWRKATENGFKVGTYEELIPQADLVVNLTPDKQHSAVVQAVQPLMKDGAALGYSHGFNIVEVGEQVRKDITVVMVAPKCPGTEVREEYKRGFGVPTLIAVHPENDPKGEGMAIAKAWAAATGGHRAGVLESSFVAEVKSDLMGEQTILCGMLQAGSLLCFDKLVSEGTDAAYAEKLIQFGWETITEALKQGGITLMMDRLSNPAKLRAYALSEQLKEIMAPLFQKHMDDIISGEFSSGMMADWANDDKKLLNWREETGKTAFENAPQFEGKISEQEYFDHGVLMIAMVKAGVELAFETMVDSGIIEESAYYESLHELPLIANTIARKRLYEMNVVISDTAEYGNYLFANAAVPLLKGKFMDSLQAGDLGKSVAGTAVDNAQLRDVNEAIRNHPIEAVGHKLRGYMTDMKRIAVAG</sequence>
<feature type="chain" id="PRO_1000050591" description="Ketol-acid reductoisomerase (NADP(+))">
    <location>
        <begin position="1"/>
        <end position="492"/>
    </location>
</feature>
<feature type="domain" description="KARI N-terminal Rossmann" evidence="2">
    <location>
        <begin position="15"/>
        <end position="208"/>
    </location>
</feature>
<feature type="domain" description="KARI C-terminal knotted 1" evidence="3">
    <location>
        <begin position="209"/>
        <end position="344"/>
    </location>
</feature>
<feature type="domain" description="KARI C-terminal knotted 2" evidence="3">
    <location>
        <begin position="345"/>
        <end position="485"/>
    </location>
</feature>
<feature type="active site" evidence="1">
    <location>
        <position position="132"/>
    </location>
</feature>
<feature type="binding site" evidence="1">
    <location>
        <begin position="45"/>
        <end position="48"/>
    </location>
    <ligand>
        <name>NADP(+)</name>
        <dbReference type="ChEBI" id="CHEBI:58349"/>
    </ligand>
</feature>
<feature type="binding site" evidence="1">
    <location>
        <position position="68"/>
    </location>
    <ligand>
        <name>NADP(+)</name>
        <dbReference type="ChEBI" id="CHEBI:58349"/>
    </ligand>
</feature>
<feature type="binding site" evidence="1">
    <location>
        <position position="76"/>
    </location>
    <ligand>
        <name>NADP(+)</name>
        <dbReference type="ChEBI" id="CHEBI:58349"/>
    </ligand>
</feature>
<feature type="binding site" evidence="1">
    <location>
        <position position="78"/>
    </location>
    <ligand>
        <name>NADP(+)</name>
        <dbReference type="ChEBI" id="CHEBI:58349"/>
    </ligand>
</feature>
<feature type="binding site" evidence="1">
    <location>
        <begin position="108"/>
        <end position="110"/>
    </location>
    <ligand>
        <name>NADP(+)</name>
        <dbReference type="ChEBI" id="CHEBI:58349"/>
    </ligand>
</feature>
<feature type="binding site" evidence="1">
    <location>
        <position position="158"/>
    </location>
    <ligand>
        <name>NADP(+)</name>
        <dbReference type="ChEBI" id="CHEBI:58349"/>
    </ligand>
</feature>
<feature type="binding site" evidence="1">
    <location>
        <position position="217"/>
    </location>
    <ligand>
        <name>Mg(2+)</name>
        <dbReference type="ChEBI" id="CHEBI:18420"/>
        <label>1</label>
    </ligand>
</feature>
<feature type="binding site" evidence="1">
    <location>
        <position position="217"/>
    </location>
    <ligand>
        <name>Mg(2+)</name>
        <dbReference type="ChEBI" id="CHEBI:18420"/>
        <label>2</label>
    </ligand>
</feature>
<feature type="binding site" evidence="1">
    <location>
        <position position="221"/>
    </location>
    <ligand>
        <name>Mg(2+)</name>
        <dbReference type="ChEBI" id="CHEBI:18420"/>
        <label>1</label>
    </ligand>
</feature>
<feature type="binding site" evidence="1">
    <location>
        <position position="389"/>
    </location>
    <ligand>
        <name>Mg(2+)</name>
        <dbReference type="ChEBI" id="CHEBI:18420"/>
        <label>2</label>
    </ligand>
</feature>
<feature type="binding site" evidence="1">
    <location>
        <position position="393"/>
    </location>
    <ligand>
        <name>Mg(2+)</name>
        <dbReference type="ChEBI" id="CHEBI:18420"/>
        <label>2</label>
    </ligand>
</feature>
<feature type="binding site" evidence="1">
    <location>
        <position position="414"/>
    </location>
    <ligand>
        <name>substrate</name>
    </ligand>
</feature>
<accession>A1JI57</accession>
<dbReference type="EC" id="1.1.1.86" evidence="1"/>
<dbReference type="EMBL" id="AM286415">
    <property type="protein sequence ID" value="CAL10295.1"/>
    <property type="molecule type" value="Genomic_DNA"/>
</dbReference>
<dbReference type="RefSeq" id="WP_005176079.1">
    <property type="nucleotide sequence ID" value="NC_008800.1"/>
</dbReference>
<dbReference type="RefSeq" id="YP_001004547.1">
    <property type="nucleotide sequence ID" value="NC_008800.1"/>
</dbReference>
<dbReference type="SMR" id="A1JI57"/>
<dbReference type="KEGG" id="yen:YE0155"/>
<dbReference type="PATRIC" id="fig|393305.7.peg.247"/>
<dbReference type="eggNOG" id="COG0059">
    <property type="taxonomic scope" value="Bacteria"/>
</dbReference>
<dbReference type="HOGENOM" id="CLU_551905_0_0_6"/>
<dbReference type="OrthoDB" id="9804088at2"/>
<dbReference type="UniPathway" id="UPA00047">
    <property type="reaction ID" value="UER00056"/>
</dbReference>
<dbReference type="UniPathway" id="UPA00049">
    <property type="reaction ID" value="UER00060"/>
</dbReference>
<dbReference type="Proteomes" id="UP000000642">
    <property type="component" value="Chromosome"/>
</dbReference>
<dbReference type="GO" id="GO:0005829">
    <property type="term" value="C:cytosol"/>
    <property type="evidence" value="ECO:0007669"/>
    <property type="project" value="TreeGrafter"/>
</dbReference>
<dbReference type="GO" id="GO:0004455">
    <property type="term" value="F:ketol-acid reductoisomerase activity"/>
    <property type="evidence" value="ECO:0007669"/>
    <property type="project" value="UniProtKB-UniRule"/>
</dbReference>
<dbReference type="GO" id="GO:0000287">
    <property type="term" value="F:magnesium ion binding"/>
    <property type="evidence" value="ECO:0007669"/>
    <property type="project" value="UniProtKB-UniRule"/>
</dbReference>
<dbReference type="GO" id="GO:0009097">
    <property type="term" value="P:isoleucine biosynthetic process"/>
    <property type="evidence" value="ECO:0007669"/>
    <property type="project" value="UniProtKB-UniRule"/>
</dbReference>
<dbReference type="GO" id="GO:0009099">
    <property type="term" value="P:L-valine biosynthetic process"/>
    <property type="evidence" value="ECO:0007669"/>
    <property type="project" value="UniProtKB-UniRule"/>
</dbReference>
<dbReference type="FunFam" id="1.10.1040.10:FF:000007">
    <property type="entry name" value="Ketol-acid reductoisomerase (NADP(+))"/>
    <property type="match status" value="1"/>
</dbReference>
<dbReference type="FunFam" id="3.40.50.720:FF:000043">
    <property type="entry name" value="Ketol-acid reductoisomerase (NADP(+))"/>
    <property type="match status" value="1"/>
</dbReference>
<dbReference type="Gene3D" id="1.10.1040.10">
    <property type="entry name" value="N-(1-d-carboxylethyl)-l-norvaline Dehydrogenase, domain 2"/>
    <property type="match status" value="1"/>
</dbReference>
<dbReference type="Gene3D" id="3.40.50.720">
    <property type="entry name" value="NAD(P)-binding Rossmann-like Domain"/>
    <property type="match status" value="1"/>
</dbReference>
<dbReference type="HAMAP" id="MF_00435">
    <property type="entry name" value="IlvC"/>
    <property type="match status" value="1"/>
</dbReference>
<dbReference type="InterPro" id="IPR008927">
    <property type="entry name" value="6-PGluconate_DH-like_C_sf"/>
</dbReference>
<dbReference type="InterPro" id="IPR013328">
    <property type="entry name" value="6PGD_dom2"/>
</dbReference>
<dbReference type="InterPro" id="IPR013023">
    <property type="entry name" value="KARI"/>
</dbReference>
<dbReference type="InterPro" id="IPR000506">
    <property type="entry name" value="KARI_C"/>
</dbReference>
<dbReference type="InterPro" id="IPR013116">
    <property type="entry name" value="KARI_N"/>
</dbReference>
<dbReference type="InterPro" id="IPR036291">
    <property type="entry name" value="NAD(P)-bd_dom_sf"/>
</dbReference>
<dbReference type="NCBIfam" id="TIGR00465">
    <property type="entry name" value="ilvC"/>
    <property type="match status" value="1"/>
</dbReference>
<dbReference type="NCBIfam" id="NF003557">
    <property type="entry name" value="PRK05225.1"/>
    <property type="match status" value="1"/>
</dbReference>
<dbReference type="PANTHER" id="PTHR21371">
    <property type="entry name" value="KETOL-ACID REDUCTOISOMERASE, MITOCHONDRIAL"/>
    <property type="match status" value="1"/>
</dbReference>
<dbReference type="PANTHER" id="PTHR21371:SF1">
    <property type="entry name" value="KETOL-ACID REDUCTOISOMERASE, MITOCHONDRIAL"/>
    <property type="match status" value="1"/>
</dbReference>
<dbReference type="Pfam" id="PF01450">
    <property type="entry name" value="KARI_C"/>
    <property type="match status" value="2"/>
</dbReference>
<dbReference type="Pfam" id="PF07991">
    <property type="entry name" value="KARI_N"/>
    <property type="match status" value="1"/>
</dbReference>
<dbReference type="SUPFAM" id="SSF48179">
    <property type="entry name" value="6-phosphogluconate dehydrogenase C-terminal domain-like"/>
    <property type="match status" value="2"/>
</dbReference>
<dbReference type="SUPFAM" id="SSF51735">
    <property type="entry name" value="NAD(P)-binding Rossmann-fold domains"/>
    <property type="match status" value="1"/>
</dbReference>
<dbReference type="PROSITE" id="PS51851">
    <property type="entry name" value="KARI_C"/>
    <property type="match status" value="2"/>
</dbReference>
<dbReference type="PROSITE" id="PS51850">
    <property type="entry name" value="KARI_N"/>
    <property type="match status" value="1"/>
</dbReference>
<protein>
    <recommendedName>
        <fullName evidence="1">Ketol-acid reductoisomerase (NADP(+))</fullName>
        <shortName evidence="1">KARI</shortName>
        <ecNumber evidence="1">1.1.1.86</ecNumber>
    </recommendedName>
    <alternativeName>
        <fullName evidence="1">Acetohydroxy-acid isomeroreductase</fullName>
        <shortName evidence="1">AHIR</shortName>
    </alternativeName>
    <alternativeName>
        <fullName evidence="1">Alpha-keto-beta-hydroxylacyl reductoisomerase</fullName>
    </alternativeName>
    <alternativeName>
        <fullName evidence="1">Ketol-acid reductoisomerase type 2</fullName>
    </alternativeName>
    <alternativeName>
        <fullName evidence="1">Ketol-acid reductoisomerase type II</fullName>
    </alternativeName>
</protein>
<name>ILVC_YERE8</name>
<keyword id="KW-0028">Amino-acid biosynthesis</keyword>
<keyword id="KW-0100">Branched-chain amino acid biosynthesis</keyword>
<keyword id="KW-0460">Magnesium</keyword>
<keyword id="KW-0479">Metal-binding</keyword>
<keyword id="KW-0521">NADP</keyword>
<keyword id="KW-0560">Oxidoreductase</keyword>
<keyword id="KW-0677">Repeat</keyword>
<reference key="1">
    <citation type="journal article" date="2006" name="PLoS Genet.">
        <title>The complete genome sequence and comparative genome analysis of the high pathogenicity Yersinia enterocolitica strain 8081.</title>
        <authorList>
            <person name="Thomson N.R."/>
            <person name="Howard S."/>
            <person name="Wren B.W."/>
            <person name="Holden M.T.G."/>
            <person name="Crossman L."/>
            <person name="Challis G.L."/>
            <person name="Churcher C."/>
            <person name="Mungall K."/>
            <person name="Brooks K."/>
            <person name="Chillingworth T."/>
            <person name="Feltwell T."/>
            <person name="Abdellah Z."/>
            <person name="Hauser H."/>
            <person name="Jagels K."/>
            <person name="Maddison M."/>
            <person name="Moule S."/>
            <person name="Sanders M."/>
            <person name="Whitehead S."/>
            <person name="Quail M.A."/>
            <person name="Dougan G."/>
            <person name="Parkhill J."/>
            <person name="Prentice M.B."/>
        </authorList>
    </citation>
    <scope>NUCLEOTIDE SEQUENCE [LARGE SCALE GENOMIC DNA]</scope>
    <source>
        <strain>NCTC 13174 / 8081</strain>
    </source>
</reference>
<organism>
    <name type="scientific">Yersinia enterocolitica serotype O:8 / biotype 1B (strain NCTC 13174 / 8081)</name>
    <dbReference type="NCBI Taxonomy" id="393305"/>
    <lineage>
        <taxon>Bacteria</taxon>
        <taxon>Pseudomonadati</taxon>
        <taxon>Pseudomonadota</taxon>
        <taxon>Gammaproteobacteria</taxon>
        <taxon>Enterobacterales</taxon>
        <taxon>Yersiniaceae</taxon>
        <taxon>Yersinia</taxon>
    </lineage>
</organism>
<proteinExistence type="inferred from homology"/>
<comment type="function">
    <text evidence="1">Involved in the biosynthesis of branched-chain amino acids (BCAA). Catalyzes an alkyl-migration followed by a ketol-acid reduction of (S)-2-acetolactate (S2AL) to yield (R)-2,3-dihydroxy-isovalerate. In the isomerase reaction, S2AL is rearranged via a Mg-dependent methyl migration to produce 3-hydroxy-3-methyl-2-ketobutyrate (HMKB). In the reductase reaction, this 2-ketoacid undergoes a metal-dependent reduction by NADPH to yield (R)-2,3-dihydroxy-isovalerate.</text>
</comment>
<comment type="catalytic activity">
    <reaction evidence="1">
        <text>(2R)-2,3-dihydroxy-3-methylbutanoate + NADP(+) = (2S)-2-acetolactate + NADPH + H(+)</text>
        <dbReference type="Rhea" id="RHEA:22068"/>
        <dbReference type="ChEBI" id="CHEBI:15378"/>
        <dbReference type="ChEBI" id="CHEBI:49072"/>
        <dbReference type="ChEBI" id="CHEBI:57783"/>
        <dbReference type="ChEBI" id="CHEBI:58349"/>
        <dbReference type="ChEBI" id="CHEBI:58476"/>
        <dbReference type="EC" id="1.1.1.86"/>
    </reaction>
</comment>
<comment type="catalytic activity">
    <reaction evidence="1">
        <text>(2R,3R)-2,3-dihydroxy-3-methylpentanoate + NADP(+) = (S)-2-ethyl-2-hydroxy-3-oxobutanoate + NADPH + H(+)</text>
        <dbReference type="Rhea" id="RHEA:13493"/>
        <dbReference type="ChEBI" id="CHEBI:15378"/>
        <dbReference type="ChEBI" id="CHEBI:49256"/>
        <dbReference type="ChEBI" id="CHEBI:49258"/>
        <dbReference type="ChEBI" id="CHEBI:57783"/>
        <dbReference type="ChEBI" id="CHEBI:58349"/>
        <dbReference type="EC" id="1.1.1.86"/>
    </reaction>
</comment>
<comment type="cofactor">
    <cofactor evidence="1">
        <name>Mg(2+)</name>
        <dbReference type="ChEBI" id="CHEBI:18420"/>
    </cofactor>
    <text evidence="1">Binds 2 magnesium ions per subunit.</text>
</comment>
<comment type="pathway">
    <text evidence="1">Amino-acid biosynthesis; L-isoleucine biosynthesis; L-isoleucine from 2-oxobutanoate: step 2/4.</text>
</comment>
<comment type="pathway">
    <text evidence="1">Amino-acid biosynthesis; L-valine biosynthesis; L-valine from pyruvate: step 2/4.</text>
</comment>
<comment type="similarity">
    <text evidence="1">Belongs to the ketol-acid reductoisomerase family.</text>
</comment>
<gene>
    <name evidence="1" type="primary">ilvC</name>
    <name type="ordered locus">YE0155</name>
</gene>
<evidence type="ECO:0000255" key="1">
    <source>
        <dbReference type="HAMAP-Rule" id="MF_00435"/>
    </source>
</evidence>
<evidence type="ECO:0000255" key="2">
    <source>
        <dbReference type="PROSITE-ProRule" id="PRU01197"/>
    </source>
</evidence>
<evidence type="ECO:0000255" key="3">
    <source>
        <dbReference type="PROSITE-ProRule" id="PRU01198"/>
    </source>
</evidence>